<name>FOLD_HELMI</name>
<organism>
    <name type="scientific">Heliobacterium modesticaldum (strain ATCC 51547 / Ice1)</name>
    <dbReference type="NCBI Taxonomy" id="498761"/>
    <lineage>
        <taxon>Bacteria</taxon>
        <taxon>Bacillati</taxon>
        <taxon>Bacillota</taxon>
        <taxon>Clostridia</taxon>
        <taxon>Eubacteriales</taxon>
        <taxon>Heliobacteriaceae</taxon>
        <taxon>Heliomicrobium</taxon>
    </lineage>
</organism>
<feature type="chain" id="PRO_1000215600" description="Bifunctional protein FolD">
    <location>
        <begin position="1"/>
        <end position="287"/>
    </location>
</feature>
<feature type="binding site" evidence="1">
    <location>
        <begin position="165"/>
        <end position="167"/>
    </location>
    <ligand>
        <name>NADP(+)</name>
        <dbReference type="ChEBI" id="CHEBI:58349"/>
    </ligand>
</feature>
<feature type="binding site" evidence="1">
    <location>
        <position position="190"/>
    </location>
    <ligand>
        <name>NADP(+)</name>
        <dbReference type="ChEBI" id="CHEBI:58349"/>
    </ligand>
</feature>
<feature type="binding site" evidence="1">
    <location>
        <position position="231"/>
    </location>
    <ligand>
        <name>NADP(+)</name>
        <dbReference type="ChEBI" id="CHEBI:58349"/>
    </ligand>
</feature>
<keyword id="KW-0028">Amino-acid biosynthesis</keyword>
<keyword id="KW-0368">Histidine biosynthesis</keyword>
<keyword id="KW-0378">Hydrolase</keyword>
<keyword id="KW-0486">Methionine biosynthesis</keyword>
<keyword id="KW-0511">Multifunctional enzyme</keyword>
<keyword id="KW-0521">NADP</keyword>
<keyword id="KW-0554">One-carbon metabolism</keyword>
<keyword id="KW-0560">Oxidoreductase</keyword>
<keyword id="KW-0658">Purine biosynthesis</keyword>
<keyword id="KW-1185">Reference proteome</keyword>
<gene>
    <name evidence="1" type="primary">folD</name>
    <name type="ordered locus">Helmi_18210</name>
    <name type="ORF">HM1_1888</name>
</gene>
<protein>
    <recommendedName>
        <fullName evidence="1">Bifunctional protein FolD</fullName>
    </recommendedName>
    <domain>
        <recommendedName>
            <fullName evidence="1">Methylenetetrahydrofolate dehydrogenase</fullName>
            <ecNumber evidence="1">1.5.1.5</ecNumber>
        </recommendedName>
    </domain>
    <domain>
        <recommendedName>
            <fullName evidence="1">Methenyltetrahydrofolate cyclohydrolase</fullName>
            <ecNumber evidence="1">3.5.4.9</ecNumber>
        </recommendedName>
    </domain>
</protein>
<evidence type="ECO:0000255" key="1">
    <source>
        <dbReference type="HAMAP-Rule" id="MF_01576"/>
    </source>
</evidence>
<dbReference type="EC" id="1.5.1.5" evidence="1"/>
<dbReference type="EC" id="3.5.4.9" evidence="1"/>
<dbReference type="EMBL" id="CP000930">
    <property type="protein sequence ID" value="ABZ84446.1"/>
    <property type="molecule type" value="Genomic_DNA"/>
</dbReference>
<dbReference type="RefSeq" id="WP_012282949.1">
    <property type="nucleotide sequence ID" value="NC_010337.2"/>
</dbReference>
<dbReference type="SMR" id="B0TFC9"/>
<dbReference type="STRING" id="498761.HM1_1888"/>
<dbReference type="KEGG" id="hmo:HM1_1888"/>
<dbReference type="eggNOG" id="COG0190">
    <property type="taxonomic scope" value="Bacteria"/>
</dbReference>
<dbReference type="HOGENOM" id="CLU_034045_2_1_9"/>
<dbReference type="OrthoDB" id="9803580at2"/>
<dbReference type="UniPathway" id="UPA00193"/>
<dbReference type="Proteomes" id="UP000008550">
    <property type="component" value="Chromosome"/>
</dbReference>
<dbReference type="GO" id="GO:0005829">
    <property type="term" value="C:cytosol"/>
    <property type="evidence" value="ECO:0007669"/>
    <property type="project" value="TreeGrafter"/>
</dbReference>
<dbReference type="GO" id="GO:0004477">
    <property type="term" value="F:methenyltetrahydrofolate cyclohydrolase activity"/>
    <property type="evidence" value="ECO:0007669"/>
    <property type="project" value="UniProtKB-UniRule"/>
</dbReference>
<dbReference type="GO" id="GO:0004488">
    <property type="term" value="F:methylenetetrahydrofolate dehydrogenase (NADP+) activity"/>
    <property type="evidence" value="ECO:0007669"/>
    <property type="project" value="UniProtKB-UniRule"/>
</dbReference>
<dbReference type="GO" id="GO:0000105">
    <property type="term" value="P:L-histidine biosynthetic process"/>
    <property type="evidence" value="ECO:0007669"/>
    <property type="project" value="UniProtKB-KW"/>
</dbReference>
<dbReference type="GO" id="GO:0009086">
    <property type="term" value="P:methionine biosynthetic process"/>
    <property type="evidence" value="ECO:0007669"/>
    <property type="project" value="UniProtKB-KW"/>
</dbReference>
<dbReference type="GO" id="GO:0006164">
    <property type="term" value="P:purine nucleotide biosynthetic process"/>
    <property type="evidence" value="ECO:0007669"/>
    <property type="project" value="UniProtKB-KW"/>
</dbReference>
<dbReference type="GO" id="GO:0035999">
    <property type="term" value="P:tetrahydrofolate interconversion"/>
    <property type="evidence" value="ECO:0007669"/>
    <property type="project" value="UniProtKB-UniRule"/>
</dbReference>
<dbReference type="CDD" id="cd01080">
    <property type="entry name" value="NAD_bind_m-THF_DH_Cyclohyd"/>
    <property type="match status" value="1"/>
</dbReference>
<dbReference type="FunFam" id="3.40.50.720:FF:000094">
    <property type="entry name" value="Bifunctional protein FolD"/>
    <property type="match status" value="1"/>
</dbReference>
<dbReference type="FunFam" id="3.40.50.10860:FF:000005">
    <property type="entry name" value="C-1-tetrahydrofolate synthase, cytoplasmic, putative"/>
    <property type="match status" value="1"/>
</dbReference>
<dbReference type="Gene3D" id="3.40.50.10860">
    <property type="entry name" value="Leucine Dehydrogenase, chain A, domain 1"/>
    <property type="match status" value="1"/>
</dbReference>
<dbReference type="Gene3D" id="3.40.50.720">
    <property type="entry name" value="NAD(P)-binding Rossmann-like Domain"/>
    <property type="match status" value="1"/>
</dbReference>
<dbReference type="HAMAP" id="MF_01576">
    <property type="entry name" value="THF_DHG_CYH"/>
    <property type="match status" value="1"/>
</dbReference>
<dbReference type="InterPro" id="IPR046346">
    <property type="entry name" value="Aminoacid_DH-like_N_sf"/>
</dbReference>
<dbReference type="InterPro" id="IPR036291">
    <property type="entry name" value="NAD(P)-bd_dom_sf"/>
</dbReference>
<dbReference type="InterPro" id="IPR000672">
    <property type="entry name" value="THF_DH/CycHdrlase"/>
</dbReference>
<dbReference type="InterPro" id="IPR020630">
    <property type="entry name" value="THF_DH/CycHdrlase_cat_dom"/>
</dbReference>
<dbReference type="InterPro" id="IPR020631">
    <property type="entry name" value="THF_DH/CycHdrlase_NAD-bd_dom"/>
</dbReference>
<dbReference type="PANTHER" id="PTHR48099:SF5">
    <property type="entry name" value="C-1-TETRAHYDROFOLATE SYNTHASE, CYTOPLASMIC"/>
    <property type="match status" value="1"/>
</dbReference>
<dbReference type="PANTHER" id="PTHR48099">
    <property type="entry name" value="C-1-TETRAHYDROFOLATE SYNTHASE, CYTOPLASMIC-RELATED"/>
    <property type="match status" value="1"/>
</dbReference>
<dbReference type="Pfam" id="PF00763">
    <property type="entry name" value="THF_DHG_CYH"/>
    <property type="match status" value="1"/>
</dbReference>
<dbReference type="Pfam" id="PF02882">
    <property type="entry name" value="THF_DHG_CYH_C"/>
    <property type="match status" value="1"/>
</dbReference>
<dbReference type="PRINTS" id="PR00085">
    <property type="entry name" value="THFDHDRGNASE"/>
</dbReference>
<dbReference type="SUPFAM" id="SSF53223">
    <property type="entry name" value="Aminoacid dehydrogenase-like, N-terminal domain"/>
    <property type="match status" value="1"/>
</dbReference>
<dbReference type="SUPFAM" id="SSF51735">
    <property type="entry name" value="NAD(P)-binding Rossmann-fold domains"/>
    <property type="match status" value="1"/>
</dbReference>
<sequence>MTAQYIDGKAIAAQLRAEIKAEVASLREQGIVPKLAVILVGDDPASVVYARSKEKAAANLGIAFELFTLPGDTTEAALLALIERLNADAAVHGIMVELPLPKQISKEKVLEAIHPLKDVDGVHPLNRGYLMAGQPGLVPATPMSCMELLARSGVELAGKRVVIIGRGETVGKPLFFLLLRRNATVTVCHTRTKDLAAEVRRAEIVIAAAGKAGLVTGEMIAPDAVVIDAGINEGEDGNIVGDVKTAEAAERASLISPVPGGVGACTTALLFRNVLFGLKLQGGMAHE</sequence>
<accession>B0TFC9</accession>
<comment type="function">
    <text evidence="1">Catalyzes the oxidation of 5,10-methylenetetrahydrofolate to 5,10-methenyltetrahydrofolate and then the hydrolysis of 5,10-methenyltetrahydrofolate to 10-formyltetrahydrofolate.</text>
</comment>
<comment type="catalytic activity">
    <reaction evidence="1">
        <text>(6R)-5,10-methylene-5,6,7,8-tetrahydrofolate + NADP(+) = (6R)-5,10-methenyltetrahydrofolate + NADPH</text>
        <dbReference type="Rhea" id="RHEA:22812"/>
        <dbReference type="ChEBI" id="CHEBI:15636"/>
        <dbReference type="ChEBI" id="CHEBI:57455"/>
        <dbReference type="ChEBI" id="CHEBI:57783"/>
        <dbReference type="ChEBI" id="CHEBI:58349"/>
        <dbReference type="EC" id="1.5.1.5"/>
    </reaction>
</comment>
<comment type="catalytic activity">
    <reaction evidence="1">
        <text>(6R)-5,10-methenyltetrahydrofolate + H2O = (6R)-10-formyltetrahydrofolate + H(+)</text>
        <dbReference type="Rhea" id="RHEA:23700"/>
        <dbReference type="ChEBI" id="CHEBI:15377"/>
        <dbReference type="ChEBI" id="CHEBI:15378"/>
        <dbReference type="ChEBI" id="CHEBI:57455"/>
        <dbReference type="ChEBI" id="CHEBI:195366"/>
        <dbReference type="EC" id="3.5.4.9"/>
    </reaction>
</comment>
<comment type="pathway">
    <text evidence="1">One-carbon metabolism; tetrahydrofolate interconversion.</text>
</comment>
<comment type="subunit">
    <text evidence="1">Homodimer.</text>
</comment>
<comment type="similarity">
    <text evidence="1">Belongs to the tetrahydrofolate dehydrogenase/cyclohydrolase family.</text>
</comment>
<proteinExistence type="inferred from homology"/>
<reference key="1">
    <citation type="journal article" date="2008" name="J. Bacteriol.">
        <title>The genome of Heliobacterium modesticaldum, a phototrophic representative of the Firmicutes containing the simplest photosynthetic apparatus.</title>
        <authorList>
            <person name="Sattley W.M."/>
            <person name="Madigan M.T."/>
            <person name="Swingley W.D."/>
            <person name="Cheung P.C."/>
            <person name="Clocksin K.M."/>
            <person name="Conrad A.L."/>
            <person name="Dejesa L.C."/>
            <person name="Honchak B.M."/>
            <person name="Jung D.O."/>
            <person name="Karbach L.E."/>
            <person name="Kurdoglu A."/>
            <person name="Lahiri S."/>
            <person name="Mastrian S.D."/>
            <person name="Page L.E."/>
            <person name="Taylor H.L."/>
            <person name="Wang Z.T."/>
            <person name="Raymond J."/>
            <person name="Chen M."/>
            <person name="Blankenship R.E."/>
            <person name="Touchman J.W."/>
        </authorList>
    </citation>
    <scope>NUCLEOTIDE SEQUENCE [LARGE SCALE GENOMIC DNA]</scope>
    <source>
        <strain>ATCC 51547 / Ice1</strain>
    </source>
</reference>